<evidence type="ECO:0000255" key="1">
    <source>
        <dbReference type="PROSITE-ProRule" id="PRU00201"/>
    </source>
</evidence>
<evidence type="ECO:0000269" key="2">
    <source>
    </source>
</evidence>
<evidence type="ECO:0000305" key="3"/>
<evidence type="ECO:0000312" key="4">
    <source>
        <dbReference type="HGNC" id="HGNC:11596"/>
    </source>
</evidence>
<sequence length="448" mass="48238">MAMSELGTRKPSDGTVSHLLNVVESELQAGREKGDPTEKQLQIILEDAPLWQRFKEVTNEMIVTKNGRRMFPVLKISVTGLDPNAMYSLLLDFVPTDSHRWKYVNGEWVPAGKPEVSSHSCVYIHPDSPNFGAHWMKAPISFSKVKLTNKLNGGGQIMLNSLHKYEPQVHIVRVGSAHRMVTNCSFPETQFIAVTAYQNEEITALKIKYNPFAKAFLDAKERNHLRDVPEAISESQHVTYSHLGGWIFSNPDGVCTAGNSNYQYAAPLPLPAPHTHHGCEHYSGLRGHRQAPYPSAYMHRNHSPSVNLIESSSNNLQVFSGPDSWTSLSSTPHASILSVPHTNGPINPGPSPYPCLWTISNGAGGPSGPGPEVHASTPGAFLLGNPAVTSPPSVLSTQAPTSAGVEVLGEPSLTSIAVSTWTAVASHPFAGWGGPGAGGHHSPSSLDG</sequence>
<keyword id="KW-0010">Activator</keyword>
<keyword id="KW-0225">Disease variant</keyword>
<keyword id="KW-0238">DNA-binding</keyword>
<keyword id="KW-0539">Nucleus</keyword>
<keyword id="KW-1267">Proteomics identification</keyword>
<keyword id="KW-1185">Reference proteome</keyword>
<keyword id="KW-0678">Repressor</keyword>
<keyword id="KW-0804">Transcription</keyword>
<keyword id="KW-0805">Transcription regulation</keyword>
<protein>
    <recommendedName>
        <fullName evidence="3">T-box transcription factor TBX19</fullName>
        <shortName>T-box protein 19</shortName>
    </recommendedName>
    <alternativeName>
        <fullName>T-box factor, pituitary</fullName>
    </alternativeName>
</protein>
<gene>
    <name evidence="4" type="primary">TBX19</name>
    <name type="synonym">TPIT</name>
</gene>
<dbReference type="EMBL" id="AJ010277">
    <property type="protein sequence ID" value="CAB37936.1"/>
    <property type="molecule type" value="mRNA"/>
</dbReference>
<dbReference type="EMBL" id="AL009051">
    <property type="status" value="NOT_ANNOTATED_CDS"/>
    <property type="molecule type" value="Genomic_DNA"/>
</dbReference>
<dbReference type="EMBL" id="BC093664">
    <property type="protein sequence ID" value="AAH93664.1"/>
    <property type="molecule type" value="mRNA"/>
</dbReference>
<dbReference type="EMBL" id="BC093666">
    <property type="protein sequence ID" value="AAH93666.1"/>
    <property type="molecule type" value="mRNA"/>
</dbReference>
<dbReference type="CCDS" id="CCDS1272.1"/>
<dbReference type="RefSeq" id="NP_005140.1">
    <property type="nucleotide sequence ID" value="NM_005149.3"/>
</dbReference>
<dbReference type="SMR" id="O60806"/>
<dbReference type="BioGRID" id="114549">
    <property type="interactions" value="19"/>
</dbReference>
<dbReference type="FunCoup" id="O60806">
    <property type="interactions" value="86"/>
</dbReference>
<dbReference type="IntAct" id="O60806">
    <property type="interactions" value="17"/>
</dbReference>
<dbReference type="STRING" id="9606.ENSP00000356795"/>
<dbReference type="GlyGen" id="O60806">
    <property type="glycosylation" value="1 site"/>
</dbReference>
<dbReference type="iPTMnet" id="O60806"/>
<dbReference type="PhosphoSitePlus" id="O60806"/>
<dbReference type="BioMuta" id="TBX19"/>
<dbReference type="MassIVE" id="O60806"/>
<dbReference type="PaxDb" id="9606-ENSP00000356795"/>
<dbReference type="PeptideAtlas" id="O60806"/>
<dbReference type="Antibodypedia" id="1794">
    <property type="antibodies" value="143 antibodies from 22 providers"/>
</dbReference>
<dbReference type="DNASU" id="9095"/>
<dbReference type="Ensembl" id="ENST00000367821.8">
    <property type="protein sequence ID" value="ENSP00000356795.3"/>
    <property type="gene ID" value="ENSG00000143178.13"/>
</dbReference>
<dbReference type="GeneID" id="9095"/>
<dbReference type="KEGG" id="hsa:9095"/>
<dbReference type="MANE-Select" id="ENST00000367821.8">
    <property type="protein sequence ID" value="ENSP00000356795.3"/>
    <property type="RefSeq nucleotide sequence ID" value="NM_005149.3"/>
    <property type="RefSeq protein sequence ID" value="NP_005140.1"/>
</dbReference>
<dbReference type="UCSC" id="uc001gfl.5">
    <property type="organism name" value="human"/>
</dbReference>
<dbReference type="AGR" id="HGNC:11596"/>
<dbReference type="CTD" id="9095"/>
<dbReference type="DisGeNET" id="9095"/>
<dbReference type="GeneCards" id="TBX19"/>
<dbReference type="HGNC" id="HGNC:11596">
    <property type="gene designation" value="TBX19"/>
</dbReference>
<dbReference type="HPA" id="ENSG00000143178">
    <property type="expression patterns" value="Tissue enriched (pituitary)"/>
</dbReference>
<dbReference type="MalaCards" id="TBX19"/>
<dbReference type="MIM" id="201400">
    <property type="type" value="phenotype"/>
</dbReference>
<dbReference type="MIM" id="604614">
    <property type="type" value="gene"/>
</dbReference>
<dbReference type="neXtProt" id="NX_O60806"/>
<dbReference type="OpenTargets" id="ENSG00000143178"/>
<dbReference type="Orphanet" id="199296">
    <property type="disease" value="Congenital isolated ACTH deficiency"/>
</dbReference>
<dbReference type="PharmGKB" id="PA36359"/>
<dbReference type="VEuPathDB" id="HostDB:ENSG00000143178"/>
<dbReference type="eggNOG" id="KOG3585">
    <property type="taxonomic scope" value="Eukaryota"/>
</dbReference>
<dbReference type="GeneTree" id="ENSGT00940000160000"/>
<dbReference type="InParanoid" id="O60806"/>
<dbReference type="OMA" id="PHTKGAA"/>
<dbReference type="OrthoDB" id="7442607at2759"/>
<dbReference type="PAN-GO" id="O60806">
    <property type="GO annotations" value="6 GO annotations based on evolutionary models"/>
</dbReference>
<dbReference type="PhylomeDB" id="O60806"/>
<dbReference type="TreeFam" id="TF106341"/>
<dbReference type="PathwayCommons" id="O60806"/>
<dbReference type="SignaLink" id="O60806"/>
<dbReference type="BioGRID-ORCS" id="9095">
    <property type="hits" value="4 hits in 1166 CRISPR screens"/>
</dbReference>
<dbReference type="ChiTaRS" id="TBX19">
    <property type="organism name" value="human"/>
</dbReference>
<dbReference type="GeneWiki" id="TBX19"/>
<dbReference type="GenomeRNAi" id="9095"/>
<dbReference type="Pharos" id="O60806">
    <property type="development level" value="Tbio"/>
</dbReference>
<dbReference type="PRO" id="PR:O60806"/>
<dbReference type="Proteomes" id="UP000005640">
    <property type="component" value="Chromosome 1"/>
</dbReference>
<dbReference type="RNAct" id="O60806">
    <property type="molecule type" value="protein"/>
</dbReference>
<dbReference type="Bgee" id="ENSG00000143178">
    <property type="expression patterns" value="Expressed in adenohypophysis and 98 other cell types or tissues"/>
</dbReference>
<dbReference type="ExpressionAtlas" id="O60806">
    <property type="expression patterns" value="baseline and differential"/>
</dbReference>
<dbReference type="GO" id="GO:0000785">
    <property type="term" value="C:chromatin"/>
    <property type="evidence" value="ECO:0000247"/>
    <property type="project" value="NTNU_SB"/>
</dbReference>
<dbReference type="GO" id="GO:0005634">
    <property type="term" value="C:nucleus"/>
    <property type="evidence" value="ECO:0000318"/>
    <property type="project" value="GO_Central"/>
</dbReference>
<dbReference type="GO" id="GO:0001228">
    <property type="term" value="F:DNA-binding transcription activator activity, RNA polymerase II-specific"/>
    <property type="evidence" value="ECO:0007669"/>
    <property type="project" value="Ensembl"/>
</dbReference>
<dbReference type="GO" id="GO:0000981">
    <property type="term" value="F:DNA-binding transcription factor activity, RNA polymerase II-specific"/>
    <property type="evidence" value="ECO:0000247"/>
    <property type="project" value="NTNU_SB"/>
</dbReference>
<dbReference type="GO" id="GO:0000978">
    <property type="term" value="F:RNA polymerase II cis-regulatory region sequence-specific DNA binding"/>
    <property type="evidence" value="ECO:0000318"/>
    <property type="project" value="GO_Central"/>
</dbReference>
<dbReference type="GO" id="GO:1990837">
    <property type="term" value="F:sequence-specific double-stranded DNA binding"/>
    <property type="evidence" value="ECO:0000314"/>
    <property type="project" value="ARUK-UCL"/>
</dbReference>
<dbReference type="GO" id="GO:0009653">
    <property type="term" value="P:anatomical structure morphogenesis"/>
    <property type="evidence" value="ECO:0000304"/>
    <property type="project" value="ProtInc"/>
</dbReference>
<dbReference type="GO" id="GO:0001708">
    <property type="term" value="P:cell fate specification"/>
    <property type="evidence" value="ECO:0000318"/>
    <property type="project" value="GO_Central"/>
</dbReference>
<dbReference type="GO" id="GO:0003007">
    <property type="term" value="P:heart morphogenesis"/>
    <property type="evidence" value="ECO:0000318"/>
    <property type="project" value="GO_Central"/>
</dbReference>
<dbReference type="GO" id="GO:0001707">
    <property type="term" value="P:mesoderm formation"/>
    <property type="evidence" value="ECO:0000318"/>
    <property type="project" value="GO_Central"/>
</dbReference>
<dbReference type="GO" id="GO:0021983">
    <property type="term" value="P:pituitary gland development"/>
    <property type="evidence" value="ECO:0007669"/>
    <property type="project" value="Ensembl"/>
</dbReference>
<dbReference type="GO" id="GO:0045595">
    <property type="term" value="P:regulation of cell differentiation"/>
    <property type="evidence" value="ECO:0007669"/>
    <property type="project" value="Ensembl"/>
</dbReference>
<dbReference type="GO" id="GO:0042127">
    <property type="term" value="P:regulation of cell population proliferation"/>
    <property type="evidence" value="ECO:0007669"/>
    <property type="project" value="Ensembl"/>
</dbReference>
<dbReference type="GO" id="GO:0006357">
    <property type="term" value="P:regulation of transcription by RNA polymerase II"/>
    <property type="evidence" value="ECO:0000318"/>
    <property type="project" value="GO_Central"/>
</dbReference>
<dbReference type="CDD" id="cd20201">
    <property type="entry name" value="T-box_TBX19-like"/>
    <property type="match status" value="1"/>
</dbReference>
<dbReference type="FunFam" id="2.60.40.820:FF:000002">
    <property type="entry name" value="T-box transcription factor Brachyury"/>
    <property type="match status" value="1"/>
</dbReference>
<dbReference type="Gene3D" id="2.60.40.820">
    <property type="entry name" value="Transcription factor, T-box"/>
    <property type="match status" value="1"/>
</dbReference>
<dbReference type="InterPro" id="IPR008967">
    <property type="entry name" value="p53-like_TF_DNA-bd_sf"/>
</dbReference>
<dbReference type="InterPro" id="IPR046360">
    <property type="entry name" value="T-box_DNA-bd"/>
</dbReference>
<dbReference type="InterPro" id="IPR036960">
    <property type="entry name" value="T-box_sf"/>
</dbReference>
<dbReference type="InterPro" id="IPR002070">
    <property type="entry name" value="TF_Brachyury"/>
</dbReference>
<dbReference type="InterPro" id="IPR001699">
    <property type="entry name" value="TF_T-box"/>
</dbReference>
<dbReference type="InterPro" id="IPR018186">
    <property type="entry name" value="TF_T-box_CS"/>
</dbReference>
<dbReference type="PANTHER" id="PTHR11267">
    <property type="entry name" value="T-BOX PROTEIN-RELATED"/>
    <property type="match status" value="1"/>
</dbReference>
<dbReference type="PANTHER" id="PTHR11267:SF114">
    <property type="entry name" value="T-BOX TRANSCRIPTION FACTOR TBX19"/>
    <property type="match status" value="1"/>
</dbReference>
<dbReference type="Pfam" id="PF00907">
    <property type="entry name" value="T-box"/>
    <property type="match status" value="1"/>
</dbReference>
<dbReference type="PRINTS" id="PR00938">
    <property type="entry name" value="BRACHYURY"/>
</dbReference>
<dbReference type="PRINTS" id="PR00937">
    <property type="entry name" value="TBOX"/>
</dbReference>
<dbReference type="SMART" id="SM00425">
    <property type="entry name" value="TBOX"/>
    <property type="match status" value="1"/>
</dbReference>
<dbReference type="SUPFAM" id="SSF49417">
    <property type="entry name" value="p53-like transcription factors"/>
    <property type="match status" value="1"/>
</dbReference>
<dbReference type="PROSITE" id="PS01283">
    <property type="entry name" value="TBOX_1"/>
    <property type="match status" value="1"/>
</dbReference>
<dbReference type="PROSITE" id="PS01264">
    <property type="entry name" value="TBOX_2"/>
    <property type="match status" value="1"/>
</dbReference>
<dbReference type="PROSITE" id="PS50252">
    <property type="entry name" value="TBOX_3"/>
    <property type="match status" value="1"/>
</dbReference>
<reference key="1">
    <citation type="journal article" date="1999" name="Genomics">
        <title>Identification, mapping and phylogenomic analysis of four new human members of the T-box gene family: EOMES, TBX6, TBX18, and TBX19.</title>
        <authorList>
            <person name="Yi C.-H."/>
            <person name="Terrett J.A."/>
            <person name="Li Q.-Y."/>
            <person name="Ellington K."/>
            <person name="Packham E.A."/>
            <person name="Amstrong-Buisseret L."/>
            <person name="McClure P."/>
            <person name="Slingsby T."/>
            <person name="Brook J.D."/>
        </authorList>
    </citation>
    <scope>NUCLEOTIDE SEQUENCE [MRNA]</scope>
</reference>
<reference key="2">
    <citation type="journal article" date="2006" name="Nature">
        <title>The DNA sequence and biological annotation of human chromosome 1.</title>
        <authorList>
            <person name="Gregory S.G."/>
            <person name="Barlow K.F."/>
            <person name="McLay K.E."/>
            <person name="Kaul R."/>
            <person name="Swarbreck D."/>
            <person name="Dunham A."/>
            <person name="Scott C.E."/>
            <person name="Howe K.L."/>
            <person name="Woodfine K."/>
            <person name="Spencer C.C.A."/>
            <person name="Jones M.C."/>
            <person name="Gillson C."/>
            <person name="Searle S."/>
            <person name="Zhou Y."/>
            <person name="Kokocinski F."/>
            <person name="McDonald L."/>
            <person name="Evans R."/>
            <person name="Phillips K."/>
            <person name="Atkinson A."/>
            <person name="Cooper R."/>
            <person name="Jones C."/>
            <person name="Hall R.E."/>
            <person name="Andrews T.D."/>
            <person name="Lloyd C."/>
            <person name="Ainscough R."/>
            <person name="Almeida J.P."/>
            <person name="Ambrose K.D."/>
            <person name="Anderson F."/>
            <person name="Andrew R.W."/>
            <person name="Ashwell R.I.S."/>
            <person name="Aubin K."/>
            <person name="Babbage A.K."/>
            <person name="Bagguley C.L."/>
            <person name="Bailey J."/>
            <person name="Beasley H."/>
            <person name="Bethel G."/>
            <person name="Bird C.P."/>
            <person name="Bray-Allen S."/>
            <person name="Brown J.Y."/>
            <person name="Brown A.J."/>
            <person name="Buckley D."/>
            <person name="Burton J."/>
            <person name="Bye J."/>
            <person name="Carder C."/>
            <person name="Chapman J.C."/>
            <person name="Clark S.Y."/>
            <person name="Clarke G."/>
            <person name="Clee C."/>
            <person name="Cobley V."/>
            <person name="Collier R.E."/>
            <person name="Corby N."/>
            <person name="Coville G.J."/>
            <person name="Davies J."/>
            <person name="Deadman R."/>
            <person name="Dunn M."/>
            <person name="Earthrowl M."/>
            <person name="Ellington A.G."/>
            <person name="Errington H."/>
            <person name="Frankish A."/>
            <person name="Frankland J."/>
            <person name="French L."/>
            <person name="Garner P."/>
            <person name="Garnett J."/>
            <person name="Gay L."/>
            <person name="Ghori M.R.J."/>
            <person name="Gibson R."/>
            <person name="Gilby L.M."/>
            <person name="Gillett W."/>
            <person name="Glithero R.J."/>
            <person name="Grafham D.V."/>
            <person name="Griffiths C."/>
            <person name="Griffiths-Jones S."/>
            <person name="Grocock R."/>
            <person name="Hammond S."/>
            <person name="Harrison E.S.I."/>
            <person name="Hart E."/>
            <person name="Haugen E."/>
            <person name="Heath P.D."/>
            <person name="Holmes S."/>
            <person name="Holt K."/>
            <person name="Howden P.J."/>
            <person name="Hunt A.R."/>
            <person name="Hunt S.E."/>
            <person name="Hunter G."/>
            <person name="Isherwood J."/>
            <person name="James R."/>
            <person name="Johnson C."/>
            <person name="Johnson D."/>
            <person name="Joy A."/>
            <person name="Kay M."/>
            <person name="Kershaw J.K."/>
            <person name="Kibukawa M."/>
            <person name="Kimberley A.M."/>
            <person name="King A."/>
            <person name="Knights A.J."/>
            <person name="Lad H."/>
            <person name="Laird G."/>
            <person name="Lawlor S."/>
            <person name="Leongamornlert D.A."/>
            <person name="Lloyd D.M."/>
            <person name="Loveland J."/>
            <person name="Lovell J."/>
            <person name="Lush M.J."/>
            <person name="Lyne R."/>
            <person name="Martin S."/>
            <person name="Mashreghi-Mohammadi M."/>
            <person name="Matthews L."/>
            <person name="Matthews N.S.W."/>
            <person name="McLaren S."/>
            <person name="Milne S."/>
            <person name="Mistry S."/>
            <person name="Moore M.J.F."/>
            <person name="Nickerson T."/>
            <person name="O'Dell C.N."/>
            <person name="Oliver K."/>
            <person name="Palmeiri A."/>
            <person name="Palmer S.A."/>
            <person name="Parker A."/>
            <person name="Patel D."/>
            <person name="Pearce A.V."/>
            <person name="Peck A.I."/>
            <person name="Pelan S."/>
            <person name="Phelps K."/>
            <person name="Phillimore B.J."/>
            <person name="Plumb R."/>
            <person name="Rajan J."/>
            <person name="Raymond C."/>
            <person name="Rouse G."/>
            <person name="Saenphimmachak C."/>
            <person name="Sehra H.K."/>
            <person name="Sheridan E."/>
            <person name="Shownkeen R."/>
            <person name="Sims S."/>
            <person name="Skuce C.D."/>
            <person name="Smith M."/>
            <person name="Steward C."/>
            <person name="Subramanian S."/>
            <person name="Sycamore N."/>
            <person name="Tracey A."/>
            <person name="Tromans A."/>
            <person name="Van Helmond Z."/>
            <person name="Wall M."/>
            <person name="Wallis J.M."/>
            <person name="White S."/>
            <person name="Whitehead S.L."/>
            <person name="Wilkinson J.E."/>
            <person name="Willey D.L."/>
            <person name="Williams H."/>
            <person name="Wilming L."/>
            <person name="Wray P.W."/>
            <person name="Wu Z."/>
            <person name="Coulson A."/>
            <person name="Vaudin M."/>
            <person name="Sulston J.E."/>
            <person name="Durbin R.M."/>
            <person name="Hubbard T."/>
            <person name="Wooster R."/>
            <person name="Dunham I."/>
            <person name="Carter N.P."/>
            <person name="McVean G."/>
            <person name="Ross M.T."/>
            <person name="Harrow J."/>
            <person name="Olson M.V."/>
            <person name="Beck S."/>
            <person name="Rogers J."/>
            <person name="Bentley D.R."/>
        </authorList>
    </citation>
    <scope>NUCLEOTIDE SEQUENCE [LARGE SCALE GENOMIC DNA]</scope>
</reference>
<reference key="3">
    <citation type="journal article" date="2004" name="Genome Res.">
        <title>The status, quality, and expansion of the NIH full-length cDNA project: the Mammalian Gene Collection (MGC).</title>
        <authorList>
            <consortium name="The MGC Project Team"/>
        </authorList>
    </citation>
    <scope>NUCLEOTIDE SEQUENCE [LARGE SCALE MRNA]</scope>
</reference>
<reference key="4">
    <citation type="journal article" date="2001" name="Cell">
        <title>A pituitary cell-restricted T-box factor, Tpit, activates POMC transcription in cooperation with Pitx homeoproteins.</title>
        <authorList>
            <person name="Lamolet B."/>
            <person name="Pulichino A.-M."/>
            <person name="Lamonerie T."/>
            <person name="Gauthier Y."/>
            <person name="Brue T."/>
            <person name="Enjalbert A."/>
            <person name="Drouin J."/>
        </authorList>
    </citation>
    <scope>FUNCTION</scope>
    <scope>VARIANT IAD PHE-128</scope>
</reference>
<feature type="chain" id="PRO_0000184449" description="T-box transcription factor TBX19">
    <location>
        <begin position="1"/>
        <end position="448"/>
    </location>
</feature>
<feature type="DNA-binding region" description="T-box" evidence="1">
    <location>
        <begin position="45"/>
        <end position="218"/>
    </location>
</feature>
<feature type="sequence variant" id="VAR_018387" description="In IAD; dbSNP:rs74315377." evidence="2">
    <original>S</original>
    <variation>F</variation>
    <location>
        <position position="128"/>
    </location>
</feature>
<comment type="function">
    <text evidence="2">Transcriptional regulator involved in developmental processes. Can activate POMC gene expression and repress the alpha glycoprotein subunit and thyroid-stimulating hormone beta promoters.</text>
</comment>
<comment type="interaction">
    <interactant intactId="EBI-12096770">
        <id>O60806</id>
    </interactant>
    <interactant intactId="EBI-10188645">
        <id>O75603</id>
        <label>GCM2</label>
    </interactant>
    <organismsDiffer>false</organismsDiffer>
    <experiments>3</experiments>
</comment>
<comment type="interaction">
    <interactant intactId="EBI-12096770">
        <id>O60806</id>
    </interactant>
    <interactant intactId="EBI-740220">
        <id>O14964</id>
        <label>HGS</label>
    </interactant>
    <organismsDiffer>false</organismsDiffer>
    <experiments>3</experiments>
</comment>
<comment type="interaction">
    <interactant intactId="EBI-12096770">
        <id>O60806</id>
    </interactant>
    <interactant intactId="EBI-1752118">
        <id>P31273</id>
        <label>HOXC8</label>
    </interactant>
    <organismsDiffer>false</organismsDiffer>
    <experiments>3</experiments>
</comment>
<comment type="interaction">
    <interactant intactId="EBI-12096770">
        <id>O60806</id>
    </interactant>
    <interactant intactId="EBI-12100506">
        <id>P78412</id>
        <label>IRX6</label>
    </interactant>
    <organismsDiffer>false</organismsDiffer>
    <experiments>3</experiments>
</comment>
<comment type="interaction">
    <interactant intactId="EBI-12096770">
        <id>O60806</id>
    </interactant>
    <interactant intactId="EBI-2341787">
        <id>Q17RB8</id>
        <label>LONRF1</label>
    </interactant>
    <organismsDiffer>false</organismsDiffer>
    <experiments>3</experiments>
</comment>
<comment type="interaction">
    <interactant intactId="EBI-12096770">
        <id>O60806</id>
    </interactant>
    <interactant intactId="EBI-11746523">
        <id>Q14511-2</id>
        <label>NEDD9</label>
    </interactant>
    <organismsDiffer>false</organismsDiffer>
    <experiments>3</experiments>
</comment>
<comment type="interaction">
    <interactant intactId="EBI-12096770">
        <id>O60806</id>
    </interactant>
    <interactant intactId="EBI-748265">
        <id>P78337</id>
        <label>PITX1</label>
    </interactant>
    <organismsDiffer>false</organismsDiffer>
    <experiments>3</experiments>
</comment>
<comment type="interaction">
    <interactant intactId="EBI-12096770">
        <id>O60806</id>
    </interactant>
    <interactant intactId="EBI-1389308">
        <id>Q7Z3K3</id>
        <label>POGZ</label>
    </interactant>
    <organismsDiffer>false</organismsDiffer>
    <experiments>3</experiments>
</comment>
<comment type="interaction">
    <interactant intactId="EBI-12096770">
        <id>O60806</id>
    </interactant>
    <interactant intactId="EBI-11986293">
        <id>P0CG20</id>
        <label>PRR35</label>
    </interactant>
    <organismsDiffer>false</organismsDiffer>
    <experiments>3</experiments>
</comment>
<comment type="interaction">
    <interactant intactId="EBI-12096770">
        <id>O60806</id>
    </interactant>
    <interactant intactId="EBI-5542466">
        <id>Q8WUD1</id>
        <label>RAB2B</label>
    </interactant>
    <organismsDiffer>false</organismsDiffer>
    <experiments>3</experiments>
</comment>
<comment type="interaction">
    <interactant intactId="EBI-12096770">
        <id>O60806</id>
    </interactant>
    <interactant intactId="EBI-2824328">
        <id>O95947</id>
        <label>TBX6</label>
    </interactant>
    <organismsDiffer>false</organismsDiffer>
    <experiments>3</experiments>
</comment>
<comment type="interaction">
    <interactant intactId="EBI-12096770">
        <id>O60806</id>
    </interactant>
    <interactant intactId="EBI-357061">
        <id>Q92734</id>
        <label>TFG</label>
    </interactant>
    <organismsDiffer>false</organismsDiffer>
    <experiments>3</experiments>
</comment>
<comment type="interaction">
    <interactant intactId="EBI-12096770">
        <id>O60806</id>
    </interactant>
    <interactant intactId="EBI-10191303">
        <id>O95231</id>
        <label>VENTX</label>
    </interactant>
    <organismsDiffer>false</organismsDiffer>
    <experiments>3</experiments>
</comment>
<comment type="interaction">
    <interactant intactId="EBI-12096770">
        <id>O60806</id>
    </interactant>
    <interactant intactId="EBI-11963196">
        <id>Q15915</id>
        <label>ZIC1</label>
    </interactant>
    <organismsDiffer>false</organismsDiffer>
    <experiments>3</experiments>
</comment>
<comment type="subcellular location">
    <subcellularLocation>
        <location evidence="1">Nucleus</location>
    </subcellularLocation>
</comment>
<comment type="disease" evidence="2">
    <disease id="DI-00035">
        <name>ACTH deficiency, isolated</name>
        <acronym>IAD</acronym>
        <description>An autosomal recessive disorder that is characterized by adrenal insufficiency symptoms, such as weight loss, lack of appetite (anorexia), weakness, nausea, vomiting and low blood pressure (hypotension). The pituitary hormone ACTH is decreased or absent, and other cortisol and other steroid hormone levels in the blood are abnormally low.</description>
        <dbReference type="MIM" id="201400"/>
    </disease>
    <text>The disease is caused by variants affecting the gene represented in this entry.</text>
</comment>
<accession>O60806</accession>
<accession>Q52M53</accession>
<proteinExistence type="evidence at protein level"/>
<organism>
    <name type="scientific">Homo sapiens</name>
    <name type="common">Human</name>
    <dbReference type="NCBI Taxonomy" id="9606"/>
    <lineage>
        <taxon>Eukaryota</taxon>
        <taxon>Metazoa</taxon>
        <taxon>Chordata</taxon>
        <taxon>Craniata</taxon>
        <taxon>Vertebrata</taxon>
        <taxon>Euteleostomi</taxon>
        <taxon>Mammalia</taxon>
        <taxon>Eutheria</taxon>
        <taxon>Euarchontoglires</taxon>
        <taxon>Primates</taxon>
        <taxon>Haplorrhini</taxon>
        <taxon>Catarrhini</taxon>
        <taxon>Hominidae</taxon>
        <taxon>Homo</taxon>
    </lineage>
</organism>
<name>TBX19_HUMAN</name>